<protein>
    <recommendedName>
        <fullName evidence="4">L-malyl-CoA/beta-methylmalyl-CoA lyase</fullName>
        <ecNumber evidence="2">4.1.3.24</ecNumber>
    </recommendedName>
    <alternativeName>
        <fullName evidence="1">(3S)-malyl-CoA/beta-methylmalyl-CoA lyase</fullName>
    </alternativeName>
</protein>
<evidence type="ECO:0000250" key="1">
    <source>
        <dbReference type="UniProtKB" id="Q3J5L6"/>
    </source>
</evidence>
<evidence type="ECO:0000269" key="2">
    <source>
    </source>
</evidence>
<evidence type="ECO:0000305" key="3"/>
<evidence type="ECO:0000312" key="4">
    <source>
        <dbReference type="EMBL" id="ACI22682.1"/>
    </source>
</evidence>
<feature type="initiator methionine" description="Removed" evidence="2">
    <location>
        <position position="1"/>
    </location>
</feature>
<feature type="chain" id="PRO_0000404699" description="L-malyl-CoA/beta-methylmalyl-CoA lyase">
    <location>
        <begin position="2"/>
        <end position="318"/>
    </location>
</feature>
<feature type="binding site" evidence="1">
    <location>
        <position position="19"/>
    </location>
    <ligand>
        <name>substrate</name>
    </ligand>
</feature>
<feature type="binding site" evidence="1">
    <location>
        <position position="24"/>
    </location>
    <ligand>
        <name>substrate</name>
    </ligand>
</feature>
<feature type="binding site" evidence="1">
    <location>
        <position position="30"/>
    </location>
    <ligand>
        <name>substrate</name>
    </ligand>
</feature>
<feature type="binding site" evidence="1">
    <location>
        <position position="76"/>
    </location>
    <ligand>
        <name>substrate</name>
    </ligand>
</feature>
<feature type="binding site" evidence="1">
    <location>
        <position position="141"/>
    </location>
    <ligand>
        <name>Mg(2+)</name>
        <dbReference type="ChEBI" id="CHEBI:18420"/>
    </ligand>
</feature>
<feature type="binding site" evidence="1">
    <location>
        <begin position="167"/>
        <end position="168"/>
    </location>
    <ligand>
        <name>substrate</name>
    </ligand>
</feature>
<feature type="binding site" evidence="1">
    <location>
        <position position="168"/>
    </location>
    <ligand>
        <name>Mg(2+)</name>
        <dbReference type="ChEBI" id="CHEBI:18420"/>
    </ligand>
</feature>
<feature type="binding site" evidence="1">
    <location>
        <begin position="251"/>
        <end position="252"/>
    </location>
    <ligand>
        <name>substrate</name>
    </ligand>
</feature>
<sequence>MSFRTQPPAPARLNRCQLFGPGSRPAIFEKMAQSAADVINLDLEDSVAPDDKPQARRNIIEASHNIDWGNKYLSVRINGLDTPFWYRDVVELLEDGSERIDQIMIPKVGCAADVYAVDALVTAIEAAKGRKKRISLEVIIESAAGIAHVEEIAAASPRLQAMSLGAADFAASMGMATTGIGGTQENYYMLHAGVKHWSDPWHWAQAAIVAACRTHGILPVDGPFGDFSDDEGFRAQALRSATLGMVGKWAIHPKQVALANEVFTPSDAAVAEAREILAAMEKAKAEGAGATVYKGRLVDIASIRQAEVIVRQAEMAKV</sequence>
<gene>
    <name evidence="1" type="primary">mcl1</name>
</gene>
<reference evidence="4" key="1">
    <citation type="submission" date="2008-09" db="EMBL/GenBank/DDBJ databases">
        <authorList>
            <person name="Alber B.E."/>
            <person name="Meister M."/>
            <person name="Fuchs G."/>
        </authorList>
    </citation>
    <scope>NUCLEOTIDE SEQUENCE [GENOMIC DNA]</scope>
    <source>
        <strain evidence="4">ATCC 33303 / B10</strain>
    </source>
</reference>
<reference evidence="3" key="2">
    <citation type="journal article" date="2005" name="J. Bacteriol.">
        <title>L-malyl-coenzyme A/beta-methylmalyl-coenzyme A lyase is involved in acetate assimilation of the isocitrate lyase-negative bacterium Rhodobacter capsulatus.</title>
        <authorList>
            <person name="Meister M."/>
            <person name="Saum S."/>
            <person name="Alber B.E."/>
            <person name="Fuchs G."/>
        </authorList>
    </citation>
    <scope>PROTEIN SEQUENCE OF 2-8</scope>
    <scope>FUNCTION</scope>
    <scope>CATALYTIC ACTIVITY</scope>
    <scope>COFACTOR</scope>
    <scope>ACTIVITY REGULATION</scope>
    <scope>BIOPHYSICOCHEMICAL PROPERTIES</scope>
    <scope>SUBUNIT</scope>
    <source>
        <strain evidence="2">ATCC 33303 / B10</strain>
    </source>
</reference>
<name>MCAL_RHOCA</name>
<keyword id="KW-0903">Direct protein sequencing</keyword>
<keyword id="KW-0456">Lyase</keyword>
<keyword id="KW-0460">Magnesium</keyword>
<keyword id="KW-0464">Manganese</keyword>
<keyword id="KW-0479">Metal-binding</keyword>
<accession>B6E2X2</accession>
<proteinExistence type="evidence at protein level"/>
<comment type="function">
    <text evidence="2">Involved in the ethylmalonyl-CoA pathway for acetate assimilation. Catalyzes the reversible condensation of glyoxylate and acetyl-CoA to L-malyl-CoA and the reversible condensation of glyoxylate and propionyl-CoA to beta-methylmalyl-CoA.</text>
</comment>
<comment type="catalytic activity">
    <reaction evidence="2">
        <text>(S)-malyl-CoA = glyoxylate + acetyl-CoA</text>
        <dbReference type="Rhea" id="RHEA:16629"/>
        <dbReference type="ChEBI" id="CHEBI:36655"/>
        <dbReference type="ChEBI" id="CHEBI:57288"/>
        <dbReference type="ChEBI" id="CHEBI:57317"/>
        <dbReference type="EC" id="4.1.3.24"/>
    </reaction>
</comment>
<comment type="catalytic activity">
    <reaction evidence="2">
        <text>(2R,3S)-beta-methylmalyl-CoA = propanoyl-CoA + glyoxylate</text>
        <dbReference type="Rhea" id="RHEA:38259"/>
        <dbReference type="ChEBI" id="CHEBI:36655"/>
        <dbReference type="ChEBI" id="CHEBI:57392"/>
        <dbReference type="ChEBI" id="CHEBI:75634"/>
        <dbReference type="EC" id="4.1.3.24"/>
    </reaction>
</comment>
<comment type="cofactor">
    <cofactor evidence="2">
        <name>Mg(2+)</name>
        <dbReference type="ChEBI" id="CHEBI:18420"/>
    </cofactor>
    <cofactor evidence="2">
        <name>Mn(2+)</name>
        <dbReference type="ChEBI" id="CHEBI:29035"/>
    </cofactor>
    <text evidence="2">Divalent cations such as magnesium or manganese.</text>
</comment>
<comment type="activity regulation">
    <text evidence="2">In vitro inhibited by EDTA.</text>
</comment>
<comment type="biophysicochemical properties">
    <kinetics>
        <KM evidence="2">15 uM for L-malyl-CoA</KM>
        <KM evidence="2">21 uM for beta-methylmalyl-CoA</KM>
        <KM evidence="2">0.14 mM for acetyl-CoA</KM>
        <KM evidence="2">1.2 mM for glyoxylate</KM>
    </kinetics>
</comment>
<comment type="subunit">
    <text evidence="2">Homohexamer. Dimer of trimers.</text>
</comment>
<comment type="similarity">
    <text evidence="3">Belongs to the HpcH/HpaI aldolase family.</text>
</comment>
<organism>
    <name type="scientific">Rhodobacter capsulatus</name>
    <name type="common">Rhodopseudomonas capsulata</name>
    <dbReference type="NCBI Taxonomy" id="1061"/>
    <lineage>
        <taxon>Bacteria</taxon>
        <taxon>Pseudomonadati</taxon>
        <taxon>Pseudomonadota</taxon>
        <taxon>Alphaproteobacteria</taxon>
        <taxon>Rhodobacterales</taxon>
        <taxon>Rhodobacter group</taxon>
        <taxon>Rhodobacter</taxon>
    </lineage>
</organism>
<dbReference type="EC" id="4.1.3.24" evidence="2"/>
<dbReference type="EMBL" id="FJ200073">
    <property type="protein sequence ID" value="ACI22682.1"/>
    <property type="molecule type" value="Genomic_DNA"/>
</dbReference>
<dbReference type="RefSeq" id="WP_013068861.1">
    <property type="nucleotide sequence ID" value="NZ_VIBE01000005.1"/>
</dbReference>
<dbReference type="SMR" id="B6E2X2"/>
<dbReference type="OMA" id="HWTYRDV"/>
<dbReference type="BioCyc" id="MetaCyc:MONOMER-13588"/>
<dbReference type="GO" id="GO:0043959">
    <property type="term" value="F:L-erythro-3-methylmalyl-CoA lyase activity"/>
    <property type="evidence" value="ECO:0007669"/>
    <property type="project" value="RHEA"/>
</dbReference>
<dbReference type="GO" id="GO:0000287">
    <property type="term" value="F:magnesium ion binding"/>
    <property type="evidence" value="ECO:0007669"/>
    <property type="project" value="TreeGrafter"/>
</dbReference>
<dbReference type="GO" id="GO:0050083">
    <property type="term" value="F:malyl-CoA lyase activity"/>
    <property type="evidence" value="ECO:0000314"/>
    <property type="project" value="UniProtKB"/>
</dbReference>
<dbReference type="GO" id="GO:0046872">
    <property type="term" value="F:metal ion binding"/>
    <property type="evidence" value="ECO:0000314"/>
    <property type="project" value="UniProtKB"/>
</dbReference>
<dbReference type="GO" id="GO:0006107">
    <property type="term" value="P:oxaloacetate metabolic process"/>
    <property type="evidence" value="ECO:0007669"/>
    <property type="project" value="TreeGrafter"/>
</dbReference>
<dbReference type="Gene3D" id="3.20.20.60">
    <property type="entry name" value="Phosphoenolpyruvate-binding domains"/>
    <property type="match status" value="1"/>
</dbReference>
<dbReference type="InterPro" id="IPR005000">
    <property type="entry name" value="Aldolase/citrate-lyase_domain"/>
</dbReference>
<dbReference type="InterPro" id="IPR011206">
    <property type="entry name" value="Citrate_lyase_beta/mcl1/mcl2"/>
</dbReference>
<dbReference type="InterPro" id="IPR015813">
    <property type="entry name" value="Pyrv/PenolPyrv_kinase-like_dom"/>
</dbReference>
<dbReference type="InterPro" id="IPR040442">
    <property type="entry name" value="Pyrv_kinase-like_dom_sf"/>
</dbReference>
<dbReference type="PANTHER" id="PTHR32308:SF10">
    <property type="entry name" value="CITRATE LYASE SUBUNIT BETA"/>
    <property type="match status" value="1"/>
</dbReference>
<dbReference type="PANTHER" id="PTHR32308">
    <property type="entry name" value="LYASE BETA SUBUNIT, PUTATIVE (AFU_ORTHOLOGUE AFUA_4G13030)-RELATED"/>
    <property type="match status" value="1"/>
</dbReference>
<dbReference type="Pfam" id="PF03328">
    <property type="entry name" value="HpcH_HpaI"/>
    <property type="match status" value="1"/>
</dbReference>
<dbReference type="PIRSF" id="PIRSF015582">
    <property type="entry name" value="Cit_lyase_B"/>
    <property type="match status" value="1"/>
</dbReference>
<dbReference type="SUPFAM" id="SSF51621">
    <property type="entry name" value="Phosphoenolpyruvate/pyruvate domain"/>
    <property type="match status" value="1"/>
</dbReference>